<gene>
    <name evidence="1" type="primary">glyQS</name>
    <name type="ordered locus">LBJ_2234</name>
</gene>
<feature type="chain" id="PRO_1000047375" description="Glycine--tRNA ligase">
    <location>
        <begin position="1"/>
        <end position="464"/>
    </location>
</feature>
<feature type="binding site" evidence="1">
    <location>
        <position position="104"/>
    </location>
    <ligand>
        <name>substrate</name>
    </ligand>
</feature>
<feature type="binding site" evidence="1">
    <location>
        <position position="175"/>
    </location>
    <ligand>
        <name>substrate</name>
    </ligand>
</feature>
<feature type="binding site" evidence="1">
    <location>
        <begin position="207"/>
        <end position="209"/>
    </location>
    <ligand>
        <name>ATP</name>
        <dbReference type="ChEBI" id="CHEBI:30616"/>
    </ligand>
</feature>
<feature type="binding site" evidence="1">
    <location>
        <begin position="217"/>
        <end position="222"/>
    </location>
    <ligand>
        <name>ATP</name>
        <dbReference type="ChEBI" id="CHEBI:30616"/>
    </ligand>
</feature>
<feature type="binding site" evidence="1">
    <location>
        <begin position="222"/>
        <end position="226"/>
    </location>
    <ligand>
        <name>substrate</name>
    </ligand>
</feature>
<feature type="binding site" evidence="1">
    <location>
        <begin position="292"/>
        <end position="293"/>
    </location>
    <ligand>
        <name>ATP</name>
        <dbReference type="ChEBI" id="CHEBI:30616"/>
    </ligand>
</feature>
<feature type="binding site" evidence="1">
    <location>
        <begin position="332"/>
        <end position="336"/>
    </location>
    <ligand>
        <name>substrate</name>
    </ligand>
</feature>
<feature type="binding site" evidence="1">
    <location>
        <begin position="336"/>
        <end position="339"/>
    </location>
    <ligand>
        <name>ATP</name>
        <dbReference type="ChEBI" id="CHEBI:30616"/>
    </ligand>
</feature>
<keyword id="KW-0030">Aminoacyl-tRNA synthetase</keyword>
<keyword id="KW-0067">ATP-binding</keyword>
<keyword id="KW-0963">Cytoplasm</keyword>
<keyword id="KW-0436">Ligase</keyword>
<keyword id="KW-0547">Nucleotide-binding</keyword>
<keyword id="KW-0648">Protein biosynthesis</keyword>
<sequence>MEKKESLDSSLKEIVSVCKRRGFVYPGSEIYGGLSNTFDYGPYGVELLQNLKQLWWKFFVHLREDVVGLDSSILLNPKVWEASGHVSNFTDPLIDCKNCKTRIRADKFLEDQKGEGFATGLTLEKMNQVIKENNFSCPNCGQRGTFTEARDFNLMFKTSHGASAEDSLDIYLRPETAQGIFLNFKNVVSTTRRKIPFGIAQIGKSFRNEIMARQFVFRTREFEQMEMEFFCEPGTQKEWFSHWVNYCMNWLTEQVGVKKENLRIREHEKEELSFYSEGTSDIEFKYNFGWGELWGIASRTDYDLNQHQKFSGEDLKYQDQVQNKKYVPFVVEPALGVNRLFLAVVTDAYQEEKLPDGEIRTVLRFSPKIAPVKVAVFPLMKKDGLLEKSREIFADLSKLGNIEYDDSGAIGKRYRRQDEIGTPFCITVDYDTLKDDTVTVRERDSMAQERVSVTRLRNWLFERL</sequence>
<accession>Q04QV5</accession>
<evidence type="ECO:0000255" key="1">
    <source>
        <dbReference type="HAMAP-Rule" id="MF_00253"/>
    </source>
</evidence>
<organism>
    <name type="scientific">Leptospira borgpetersenii serovar Hardjo-bovis (strain JB197)</name>
    <dbReference type="NCBI Taxonomy" id="355277"/>
    <lineage>
        <taxon>Bacteria</taxon>
        <taxon>Pseudomonadati</taxon>
        <taxon>Spirochaetota</taxon>
        <taxon>Spirochaetia</taxon>
        <taxon>Leptospirales</taxon>
        <taxon>Leptospiraceae</taxon>
        <taxon>Leptospira</taxon>
    </lineage>
</organism>
<dbReference type="EC" id="6.1.1.14" evidence="1"/>
<dbReference type="EMBL" id="CP000350">
    <property type="protein sequence ID" value="ABJ76715.1"/>
    <property type="molecule type" value="Genomic_DNA"/>
</dbReference>
<dbReference type="RefSeq" id="WP_011670654.1">
    <property type="nucleotide sequence ID" value="NC_008510.1"/>
</dbReference>
<dbReference type="SMR" id="Q04QV5"/>
<dbReference type="KEGG" id="lbj:LBJ_2234"/>
<dbReference type="HOGENOM" id="CLU_015515_2_1_12"/>
<dbReference type="Proteomes" id="UP000000656">
    <property type="component" value="Chromosome 1"/>
</dbReference>
<dbReference type="GO" id="GO:0005737">
    <property type="term" value="C:cytoplasm"/>
    <property type="evidence" value="ECO:0007669"/>
    <property type="project" value="UniProtKB-SubCell"/>
</dbReference>
<dbReference type="GO" id="GO:0005524">
    <property type="term" value="F:ATP binding"/>
    <property type="evidence" value="ECO:0007669"/>
    <property type="project" value="UniProtKB-UniRule"/>
</dbReference>
<dbReference type="GO" id="GO:0004820">
    <property type="term" value="F:glycine-tRNA ligase activity"/>
    <property type="evidence" value="ECO:0000250"/>
    <property type="project" value="UniProtKB"/>
</dbReference>
<dbReference type="GO" id="GO:0046983">
    <property type="term" value="F:protein dimerization activity"/>
    <property type="evidence" value="ECO:0000250"/>
    <property type="project" value="UniProtKB"/>
</dbReference>
<dbReference type="GO" id="GO:0006426">
    <property type="term" value="P:glycyl-tRNA aminoacylation"/>
    <property type="evidence" value="ECO:0007669"/>
    <property type="project" value="UniProtKB-UniRule"/>
</dbReference>
<dbReference type="CDD" id="cd00774">
    <property type="entry name" value="GlyRS-like_core"/>
    <property type="match status" value="1"/>
</dbReference>
<dbReference type="CDD" id="cd00858">
    <property type="entry name" value="GlyRS_anticodon"/>
    <property type="match status" value="1"/>
</dbReference>
<dbReference type="FunFam" id="3.40.50.800:FF:000002">
    <property type="entry name" value="Glycine--tRNA ligase"/>
    <property type="match status" value="1"/>
</dbReference>
<dbReference type="Gene3D" id="3.40.50.800">
    <property type="entry name" value="Anticodon-binding domain"/>
    <property type="match status" value="1"/>
</dbReference>
<dbReference type="Gene3D" id="3.30.930.10">
    <property type="entry name" value="Bira Bifunctional Protein, Domain 2"/>
    <property type="match status" value="1"/>
</dbReference>
<dbReference type="HAMAP" id="MF_00253_B">
    <property type="entry name" value="Gly_tRNA_synth_B"/>
    <property type="match status" value="1"/>
</dbReference>
<dbReference type="InterPro" id="IPR002314">
    <property type="entry name" value="aa-tRNA-synt_IIb"/>
</dbReference>
<dbReference type="InterPro" id="IPR006195">
    <property type="entry name" value="aa-tRNA-synth_II"/>
</dbReference>
<dbReference type="InterPro" id="IPR045864">
    <property type="entry name" value="aa-tRNA-synth_II/BPL/LPL"/>
</dbReference>
<dbReference type="InterPro" id="IPR004154">
    <property type="entry name" value="Anticodon-bd"/>
</dbReference>
<dbReference type="InterPro" id="IPR036621">
    <property type="entry name" value="Anticodon-bd_dom_sf"/>
</dbReference>
<dbReference type="InterPro" id="IPR027031">
    <property type="entry name" value="Gly-tRNA_synthase/POLG2"/>
</dbReference>
<dbReference type="InterPro" id="IPR022961">
    <property type="entry name" value="Gly_tRNA_ligase_bac"/>
</dbReference>
<dbReference type="InterPro" id="IPR033731">
    <property type="entry name" value="GlyRS-like_core"/>
</dbReference>
<dbReference type="InterPro" id="IPR002315">
    <property type="entry name" value="tRNA-synt_gly"/>
</dbReference>
<dbReference type="NCBIfam" id="TIGR00389">
    <property type="entry name" value="glyS_dimeric"/>
    <property type="match status" value="1"/>
</dbReference>
<dbReference type="NCBIfam" id="NF003211">
    <property type="entry name" value="PRK04173.1"/>
    <property type="match status" value="1"/>
</dbReference>
<dbReference type="PANTHER" id="PTHR10745:SF8">
    <property type="entry name" value="DNA POLYMERASE SUBUNIT GAMMA-2, MITOCHONDRIAL"/>
    <property type="match status" value="1"/>
</dbReference>
<dbReference type="PANTHER" id="PTHR10745">
    <property type="entry name" value="GLYCYL-TRNA SYNTHETASE/DNA POLYMERASE SUBUNIT GAMMA-2"/>
    <property type="match status" value="1"/>
</dbReference>
<dbReference type="Pfam" id="PF03129">
    <property type="entry name" value="HGTP_anticodon"/>
    <property type="match status" value="1"/>
</dbReference>
<dbReference type="Pfam" id="PF00587">
    <property type="entry name" value="tRNA-synt_2b"/>
    <property type="match status" value="1"/>
</dbReference>
<dbReference type="PRINTS" id="PR01043">
    <property type="entry name" value="TRNASYNTHGLY"/>
</dbReference>
<dbReference type="SUPFAM" id="SSF52954">
    <property type="entry name" value="Class II aaRS ABD-related"/>
    <property type="match status" value="1"/>
</dbReference>
<dbReference type="SUPFAM" id="SSF55681">
    <property type="entry name" value="Class II aaRS and biotin synthetases"/>
    <property type="match status" value="1"/>
</dbReference>
<dbReference type="PROSITE" id="PS50862">
    <property type="entry name" value="AA_TRNA_LIGASE_II"/>
    <property type="match status" value="1"/>
</dbReference>
<reference key="1">
    <citation type="journal article" date="2006" name="Proc. Natl. Acad. Sci. U.S.A.">
        <title>Genome reduction in Leptospira borgpetersenii reflects limited transmission potential.</title>
        <authorList>
            <person name="Bulach D.M."/>
            <person name="Zuerner R.L."/>
            <person name="Wilson P."/>
            <person name="Seemann T."/>
            <person name="McGrath A."/>
            <person name="Cullen P.A."/>
            <person name="Davis J."/>
            <person name="Johnson M."/>
            <person name="Kuczek E."/>
            <person name="Alt D.P."/>
            <person name="Peterson-Burch B."/>
            <person name="Coppel R.L."/>
            <person name="Rood J.I."/>
            <person name="Davies J.K."/>
            <person name="Adler B."/>
        </authorList>
    </citation>
    <scope>NUCLEOTIDE SEQUENCE [LARGE SCALE GENOMIC DNA]</scope>
    <source>
        <strain>JB197</strain>
    </source>
</reference>
<comment type="function">
    <text evidence="1">Catalyzes the attachment of glycine to tRNA(Gly).</text>
</comment>
<comment type="catalytic activity">
    <reaction evidence="1">
        <text>tRNA(Gly) + glycine + ATP = glycyl-tRNA(Gly) + AMP + diphosphate</text>
        <dbReference type="Rhea" id="RHEA:16013"/>
        <dbReference type="Rhea" id="RHEA-COMP:9664"/>
        <dbReference type="Rhea" id="RHEA-COMP:9683"/>
        <dbReference type="ChEBI" id="CHEBI:30616"/>
        <dbReference type="ChEBI" id="CHEBI:33019"/>
        <dbReference type="ChEBI" id="CHEBI:57305"/>
        <dbReference type="ChEBI" id="CHEBI:78442"/>
        <dbReference type="ChEBI" id="CHEBI:78522"/>
        <dbReference type="ChEBI" id="CHEBI:456215"/>
        <dbReference type="EC" id="6.1.1.14"/>
    </reaction>
</comment>
<comment type="subunit">
    <text evidence="1">Homodimer.</text>
</comment>
<comment type="subcellular location">
    <subcellularLocation>
        <location evidence="1">Cytoplasm</location>
    </subcellularLocation>
</comment>
<comment type="similarity">
    <text evidence="1">Belongs to the class-II aminoacyl-tRNA synthetase family.</text>
</comment>
<proteinExistence type="inferred from homology"/>
<name>SYG_LEPBJ</name>
<protein>
    <recommendedName>
        <fullName evidence="1">Glycine--tRNA ligase</fullName>
        <ecNumber evidence="1">6.1.1.14</ecNumber>
    </recommendedName>
    <alternativeName>
        <fullName evidence="1">Glycyl-tRNA synthetase</fullName>
        <shortName evidence="1">GlyRS</shortName>
    </alternativeName>
</protein>